<feature type="chain" id="PRO_0000372235" description="Putative antiporter subunit mnhD2">
    <location>
        <begin position="1"/>
        <end position="498"/>
    </location>
</feature>
<feature type="transmembrane region" description="Helical" evidence="2">
    <location>
        <begin position="2"/>
        <end position="22"/>
    </location>
</feature>
<feature type="transmembrane region" description="Helical" evidence="2">
    <location>
        <begin position="32"/>
        <end position="52"/>
    </location>
</feature>
<feature type="transmembrane region" description="Helical" evidence="2">
    <location>
        <begin position="78"/>
        <end position="98"/>
    </location>
</feature>
<feature type="transmembrane region" description="Helical" evidence="2">
    <location>
        <begin position="108"/>
        <end position="128"/>
    </location>
</feature>
<feature type="transmembrane region" description="Helical" evidence="2">
    <location>
        <begin position="130"/>
        <end position="150"/>
    </location>
</feature>
<feature type="transmembrane region" description="Helical" evidence="2">
    <location>
        <begin position="161"/>
        <end position="181"/>
    </location>
</feature>
<feature type="transmembrane region" description="Helical" evidence="2">
    <location>
        <begin position="209"/>
        <end position="229"/>
    </location>
</feature>
<feature type="transmembrane region" description="Helical" evidence="2">
    <location>
        <begin position="240"/>
        <end position="260"/>
    </location>
</feature>
<feature type="transmembrane region" description="Helical" evidence="2">
    <location>
        <begin position="271"/>
        <end position="291"/>
    </location>
</feature>
<feature type="transmembrane region" description="Helical" evidence="2">
    <location>
        <begin position="308"/>
        <end position="328"/>
    </location>
</feature>
<feature type="transmembrane region" description="Helical" evidence="2">
    <location>
        <begin position="330"/>
        <end position="350"/>
    </location>
</feature>
<feature type="transmembrane region" description="Helical" evidence="2">
    <location>
        <begin position="369"/>
        <end position="389"/>
    </location>
</feature>
<feature type="transmembrane region" description="Helical" evidence="2">
    <location>
        <begin position="406"/>
        <end position="426"/>
    </location>
</feature>
<feature type="transmembrane region" description="Helical" evidence="2">
    <location>
        <begin position="451"/>
        <end position="471"/>
    </location>
</feature>
<dbReference type="EMBL" id="AP009324">
    <property type="protein sequence ID" value="BAF77505.1"/>
    <property type="molecule type" value="Genomic_DNA"/>
</dbReference>
<dbReference type="RefSeq" id="WP_000950546.1">
    <property type="nucleotide sequence ID" value="NC_009782.1"/>
</dbReference>
<dbReference type="SMR" id="A7WZ79"/>
<dbReference type="KEGG" id="saw:SAHV_0622"/>
<dbReference type="HOGENOM" id="CLU_007100_9_2_9"/>
<dbReference type="GO" id="GO:0005886">
    <property type="term" value="C:plasma membrane"/>
    <property type="evidence" value="ECO:0007669"/>
    <property type="project" value="UniProtKB-SubCell"/>
</dbReference>
<dbReference type="GO" id="GO:0015297">
    <property type="term" value="F:antiporter activity"/>
    <property type="evidence" value="ECO:0007669"/>
    <property type="project" value="UniProtKB-KW"/>
</dbReference>
<dbReference type="GO" id="GO:0008137">
    <property type="term" value="F:NADH dehydrogenase (ubiquinone) activity"/>
    <property type="evidence" value="ECO:0007669"/>
    <property type="project" value="InterPro"/>
</dbReference>
<dbReference type="GO" id="GO:0042773">
    <property type="term" value="P:ATP synthesis coupled electron transport"/>
    <property type="evidence" value="ECO:0007669"/>
    <property type="project" value="InterPro"/>
</dbReference>
<dbReference type="InterPro" id="IPR050586">
    <property type="entry name" value="CPA3_Na-H_Antiporter_D"/>
</dbReference>
<dbReference type="InterPro" id="IPR003918">
    <property type="entry name" value="NADH_UbQ_OxRdtase"/>
</dbReference>
<dbReference type="InterPro" id="IPR001750">
    <property type="entry name" value="ND/Mrp_TM"/>
</dbReference>
<dbReference type="NCBIfam" id="NF009306">
    <property type="entry name" value="PRK12663.1"/>
    <property type="match status" value="1"/>
</dbReference>
<dbReference type="PANTHER" id="PTHR42703:SF1">
    <property type="entry name" value="NA(+)_H(+) ANTIPORTER SUBUNIT D1"/>
    <property type="match status" value="1"/>
</dbReference>
<dbReference type="PANTHER" id="PTHR42703">
    <property type="entry name" value="NADH DEHYDROGENASE"/>
    <property type="match status" value="1"/>
</dbReference>
<dbReference type="Pfam" id="PF00361">
    <property type="entry name" value="Proton_antipo_M"/>
    <property type="match status" value="1"/>
</dbReference>
<dbReference type="PRINTS" id="PR01437">
    <property type="entry name" value="NUOXDRDTASE4"/>
</dbReference>
<comment type="subunit">
    <text evidence="1">May form a heterooligomeric complex that consists of seven subunits: mnhA2, mnhB2, mnhC2, mnhD2, mnhE2, mnhF2 and mnhG2.</text>
</comment>
<comment type="subcellular location">
    <subcellularLocation>
        <location evidence="3">Cell membrane</location>
        <topology evidence="3">Multi-pass membrane protein</topology>
    </subcellularLocation>
</comment>
<comment type="similarity">
    <text evidence="3">Belongs to the CPA3 antiporters (TC 2.A.63) subunit D family.</text>
</comment>
<protein>
    <recommendedName>
        <fullName>Putative antiporter subunit mnhD2</fullName>
    </recommendedName>
    <alternativeName>
        <fullName>Mrp complex subunit D2</fullName>
    </alternativeName>
    <alternativeName>
        <fullName>Putative NADH-ubiquinone oxidoreductase subunit mnhD2</fullName>
    </alternativeName>
</protein>
<name>MNHD2_STAA1</name>
<gene>
    <name type="primary">mnhD2</name>
    <name type="synonym">mrpD2</name>
    <name type="ordered locus">SAHV_0622</name>
</gene>
<accession>A7WZ79</accession>
<evidence type="ECO:0000250" key="1"/>
<evidence type="ECO:0000255" key="2"/>
<evidence type="ECO:0000305" key="3"/>
<organism>
    <name type="scientific">Staphylococcus aureus (strain Mu3 / ATCC 700698)</name>
    <dbReference type="NCBI Taxonomy" id="418127"/>
    <lineage>
        <taxon>Bacteria</taxon>
        <taxon>Bacillati</taxon>
        <taxon>Bacillota</taxon>
        <taxon>Bacilli</taxon>
        <taxon>Bacillales</taxon>
        <taxon>Staphylococcaceae</taxon>
        <taxon>Staphylococcus</taxon>
    </lineage>
</organism>
<proteinExistence type="inferred from homology"/>
<keyword id="KW-0050">Antiport</keyword>
<keyword id="KW-1003">Cell membrane</keyword>
<keyword id="KW-0406">Ion transport</keyword>
<keyword id="KW-0472">Membrane</keyword>
<keyword id="KW-0812">Transmembrane</keyword>
<keyword id="KW-1133">Transmembrane helix</keyword>
<keyword id="KW-0813">Transport</keyword>
<reference key="1">
    <citation type="journal article" date="2008" name="Antimicrob. Agents Chemother.">
        <title>Mutated response regulator graR is responsible for phenotypic conversion of Staphylococcus aureus from heterogeneous vancomycin-intermediate resistance to vancomycin-intermediate resistance.</title>
        <authorList>
            <person name="Neoh H.-M."/>
            <person name="Cui L."/>
            <person name="Yuzawa H."/>
            <person name="Takeuchi F."/>
            <person name="Matsuo M."/>
            <person name="Hiramatsu K."/>
        </authorList>
    </citation>
    <scope>NUCLEOTIDE SEQUENCE [LARGE SCALE GENOMIC DNA]</scope>
    <source>
        <strain>Mu3 / ATCC 700698</strain>
    </source>
</reference>
<sequence length="498" mass="55187">MLSNLLILPMLLPFLCALILVFLKNNDRISKYLYLGTMTITTIISLMLLIYVQRHRPITLDFGGWSAPFGIQFLGDSLSLIMVTTASFVITLIMAYGFGRGEHKANRYHLPSFILFLSVGVIGSFLTSDLFNLYVMFEIMLLASFVLITLGQSVEQLRAAIIYVVLNIIGSWLFLLGIGLLYKTVGTLNFSHIAMRLNDMGDNRTVTMISLIFLVAFSAKAALVLFMWLPKAYAVLNTELAALFAALMTKVGAYALIRFFTLLFDQHNDLIHPLLATMAAITMVIGAIGVIAYKDIKKIAAYQVIISIGFIILGLGTNTFAGINGAIFYLVNDIVVKTLLFFIIGSLVYITGYRQYQYLNGLAKKEPLFGVAFIIMIFAIGGVPPFSGFPGKVLIFQGALQNGNYIGLALMIITSLIAMYSLFRIFFYMYFGDKDGEEVNFKKIPLYRKRILSILVVVVIAIGIAAPVVLNVTSDATELNTSDQLYQKLVNPHLKGED</sequence>